<feature type="chain" id="PRO_0000309353" description="Phthiodiolone/phenolphthiodiolone dimycocerosates ketoreductase">
    <location>
        <begin position="1"/>
        <end position="381"/>
    </location>
</feature>
<reference key="1">
    <citation type="journal article" date="2008" name="PLoS ONE">
        <title>Genetic basis of virulence attenuation revealed by comparative genomic analysis of Mycobacterium tuberculosis strain H37Ra versus H37Rv.</title>
        <authorList>
            <person name="Zheng H."/>
            <person name="Lu L."/>
            <person name="Wang B."/>
            <person name="Pu S."/>
            <person name="Zhang X."/>
            <person name="Zhu G."/>
            <person name="Shi W."/>
            <person name="Zhang L."/>
            <person name="Wang H."/>
            <person name="Wang S."/>
            <person name="Zhao G."/>
            <person name="Zhang Y."/>
        </authorList>
    </citation>
    <scope>NUCLEOTIDE SEQUENCE [LARGE SCALE GENOMIC DNA]</scope>
    <source>
        <strain>ATCC 25177 / H37Ra</strain>
    </source>
</reference>
<keyword id="KW-0444">Lipid biosynthesis</keyword>
<keyword id="KW-0443">Lipid metabolism</keyword>
<keyword id="KW-0560">Oxidoreductase</keyword>
<keyword id="KW-1185">Reference proteome</keyword>
<evidence type="ECO:0000250" key="1"/>
<evidence type="ECO:0000305" key="2"/>
<dbReference type="EC" id="1.2.-.-"/>
<dbReference type="EMBL" id="CP000611">
    <property type="protein sequence ID" value="ABQ74759.1"/>
    <property type="molecule type" value="Genomic_DNA"/>
</dbReference>
<dbReference type="RefSeq" id="WP_003414891.1">
    <property type="nucleotide sequence ID" value="NZ_CP016972.1"/>
</dbReference>
<dbReference type="SMR" id="A5U6V9"/>
<dbReference type="KEGG" id="mra:MRA_2978"/>
<dbReference type="eggNOG" id="COG2141">
    <property type="taxonomic scope" value="Bacteria"/>
</dbReference>
<dbReference type="HOGENOM" id="CLU_027853_5_3_11"/>
<dbReference type="Proteomes" id="UP000001988">
    <property type="component" value="Chromosome"/>
</dbReference>
<dbReference type="GO" id="GO:0016705">
    <property type="term" value="F:oxidoreductase activity, acting on paired donors, with incorporation or reduction of molecular oxygen"/>
    <property type="evidence" value="ECO:0007669"/>
    <property type="project" value="InterPro"/>
</dbReference>
<dbReference type="GO" id="GO:0006629">
    <property type="term" value="P:lipid metabolic process"/>
    <property type="evidence" value="ECO:0007669"/>
    <property type="project" value="UniProtKB-KW"/>
</dbReference>
<dbReference type="CDD" id="cd01097">
    <property type="entry name" value="Tetrahydromethanopterin_reductase"/>
    <property type="match status" value="1"/>
</dbReference>
<dbReference type="FunFam" id="3.20.20.30:FF:000015">
    <property type="entry name" value="Phthiodiolone/phenolphthiodiolone dimycocerosates ketoreductase"/>
    <property type="match status" value="1"/>
</dbReference>
<dbReference type="Gene3D" id="3.20.20.30">
    <property type="entry name" value="Luciferase-like domain"/>
    <property type="match status" value="1"/>
</dbReference>
<dbReference type="InterPro" id="IPR050564">
    <property type="entry name" value="F420-G6PD/mer"/>
</dbReference>
<dbReference type="InterPro" id="IPR011251">
    <property type="entry name" value="Luciferase-like_dom"/>
</dbReference>
<dbReference type="InterPro" id="IPR036661">
    <property type="entry name" value="Luciferase-like_sf"/>
</dbReference>
<dbReference type="PANTHER" id="PTHR43244">
    <property type="match status" value="1"/>
</dbReference>
<dbReference type="PANTHER" id="PTHR43244:SF1">
    <property type="entry name" value="5,10-METHYLENETETRAHYDROMETHANOPTERIN REDUCTASE"/>
    <property type="match status" value="1"/>
</dbReference>
<dbReference type="Pfam" id="PF00296">
    <property type="entry name" value="Bac_luciferase"/>
    <property type="match status" value="1"/>
</dbReference>
<dbReference type="SUPFAM" id="SSF51679">
    <property type="entry name" value="Bacterial luciferase-like"/>
    <property type="match status" value="1"/>
</dbReference>
<gene>
    <name type="ordered locus">MRA_2978</name>
</gene>
<organism>
    <name type="scientific">Mycobacterium tuberculosis (strain ATCC 25177 / H37Ra)</name>
    <dbReference type="NCBI Taxonomy" id="419947"/>
    <lineage>
        <taxon>Bacteria</taxon>
        <taxon>Bacillati</taxon>
        <taxon>Actinomycetota</taxon>
        <taxon>Actinomycetes</taxon>
        <taxon>Mycobacteriales</taxon>
        <taxon>Mycobacteriaceae</taxon>
        <taxon>Mycobacterium</taxon>
        <taxon>Mycobacterium tuberculosis complex</taxon>
    </lineage>
</organism>
<sequence>MGGLRFGFVDALVHSRLPPTLPARSSMAAATVMGADSYWVGDHLNALVPRSIATSEYLGIAAKFVPKIDANYEPWTMLGNLAFGLPSRLRLGVCVTDAGRRNPAVTAQAAATLHLLTRGRAILGIGVGEREGNEPYGVEWTKPVARFEEALATIRALWNSNGELISRESPYFPLHNALFDLPPYRGKWPEIWVAAHGPRMLRATGRYADAWIPIVVVRPSDYSRALEAVRSAASDAGRDPMSITPAAVRGIITGRNRDDVEEALESVVVKMTALGVPGEAWARHGVEHPMGADFSGVQDIIPQTMDKQTVLSYAAKVPAALMKEVVFSGTPDEVIDQVAEWRDHGLRYVVLINGSLVNPSLRKTVTAVLPHAKVLRGLKKL</sequence>
<proteinExistence type="inferred from homology"/>
<name>PHKR_MYCTA</name>
<protein>
    <recommendedName>
        <fullName>Phthiodiolone/phenolphthiodiolone dimycocerosates ketoreductase</fullName>
        <ecNumber>1.2.-.-</ecNumber>
    </recommendedName>
</protein>
<comment type="function">
    <text evidence="1">Catalyzes the reduction of the keto moiety of phthiodiolone dimycocerosates (DIM B) and glycosylated phenolphthiodiolone dimycocerosates to form the intermediate compounds phthiotriol and glycosylated phenolphthiotriol dimycocerosates during phthiocerol dimycocerosates (DIM A) and glycosylated phenolphthiocerol dimycocerosates (PGL) biosynthesis.</text>
</comment>
<comment type="similarity">
    <text evidence="2">Belongs to the mer family. Phthiodiolone/phenolphthiodiolone dimycocerosates ketoreductase subfamily.</text>
</comment>
<accession>A5U6V9</accession>